<evidence type="ECO:0000255" key="1"/>
<evidence type="ECO:0000256" key="2">
    <source>
        <dbReference type="SAM" id="MobiDB-lite"/>
    </source>
</evidence>
<organismHost>
    <name type="scientific">Magallana gigas</name>
    <name type="common">Pacific oyster</name>
    <name type="synonym">Crassostrea gigas</name>
    <dbReference type="NCBI Taxonomy" id="29159"/>
</organismHost>
<organismHost>
    <name type="scientific">Pecten maximus</name>
    <name type="common">King scallop</name>
    <name type="synonym">Pilgrim's clam</name>
    <dbReference type="NCBI Taxonomy" id="6579"/>
</organismHost>
<proteinExistence type="predicted"/>
<reference key="1">
    <citation type="journal article" date="2005" name="J. Gen. Virol.">
        <title>A novel class of herpesvirus with bivalve hosts.</title>
        <authorList>
            <person name="Davison A.J."/>
            <person name="Trus B.L."/>
            <person name="Cheng N."/>
            <person name="Steven A.C."/>
            <person name="Watson M.S."/>
            <person name="Cunningham C."/>
            <person name="Le Deuff R.M."/>
            <person name="Renault T."/>
        </authorList>
    </citation>
    <scope>NUCLEOTIDE SEQUENCE [LARGE SCALE GENOMIC DNA]</scope>
</reference>
<feature type="chain" id="PRO_0000385115" description="Uncharacterized protein ORF95">
    <location>
        <begin position="1"/>
        <end position="310"/>
    </location>
</feature>
<feature type="region of interest" description="Disordered" evidence="2">
    <location>
        <begin position="290"/>
        <end position="310"/>
    </location>
</feature>
<feature type="coiled-coil region" evidence="1">
    <location>
        <begin position="269"/>
        <end position="307"/>
    </location>
</feature>
<feature type="compositionally biased region" description="Basic and acidic residues" evidence="2">
    <location>
        <begin position="290"/>
        <end position="304"/>
    </location>
</feature>
<organism>
    <name type="scientific">Ostreid herpesvirus 1 (isolate France)</name>
    <name type="common">OsHV-1</name>
    <name type="synonym">Pacific oyster herpesvirus</name>
    <dbReference type="NCBI Taxonomy" id="654903"/>
    <lineage>
        <taxon>Viruses</taxon>
        <taxon>Duplodnaviria</taxon>
        <taxon>Heunggongvirae</taxon>
        <taxon>Peploviricota</taxon>
        <taxon>Herviviricetes</taxon>
        <taxon>Herpesvirales</taxon>
        <taxon>Malacoherpesviridae</taxon>
        <taxon>Ostreavirus</taxon>
        <taxon>Ostreavirus ostreidmalaco1</taxon>
        <taxon>Ostreid herpesvirus 1</taxon>
    </lineage>
</organism>
<protein>
    <recommendedName>
        <fullName>Uncharacterized protein ORF95</fullName>
    </recommendedName>
</protein>
<accession>Q6R7D4</accession>
<keyword id="KW-0175">Coiled coil</keyword>
<keyword id="KW-1185">Reference proteome</keyword>
<dbReference type="EMBL" id="AY509253">
    <property type="protein sequence ID" value="AAS00981.1"/>
    <property type="molecule type" value="Genomic_DNA"/>
</dbReference>
<dbReference type="RefSeq" id="YP_024634.1">
    <property type="nucleotide sequence ID" value="NC_005881.2"/>
</dbReference>
<dbReference type="KEGG" id="vg:2948205"/>
<dbReference type="Proteomes" id="UP000007021">
    <property type="component" value="Segment"/>
</dbReference>
<dbReference type="GO" id="GO:0045145">
    <property type="term" value="F:single-stranded DNA 5'-3' DNA exonuclease activity"/>
    <property type="evidence" value="ECO:0007669"/>
    <property type="project" value="InterPro"/>
</dbReference>
<dbReference type="GO" id="GO:0036297">
    <property type="term" value="P:interstrand cross-link repair"/>
    <property type="evidence" value="ECO:0007669"/>
    <property type="project" value="TreeGrafter"/>
</dbReference>
<dbReference type="InterPro" id="IPR019190">
    <property type="entry name" value="EXOV"/>
</dbReference>
<dbReference type="PANTHER" id="PTHR14464">
    <property type="entry name" value="EXONUCLEASE V"/>
    <property type="match status" value="1"/>
</dbReference>
<dbReference type="PANTHER" id="PTHR14464:SF4">
    <property type="entry name" value="EXONUCLEASE V"/>
    <property type="match status" value="1"/>
</dbReference>
<dbReference type="Pfam" id="PF09810">
    <property type="entry name" value="Exo5"/>
    <property type="match status" value="1"/>
</dbReference>
<sequence>MSHEKSVTEFTRDLVGVYINAGVVKSYAKDTKGNTRLYELSNKEIMDIGIEIHSICETDEKEYIDIDYCTEADLKIIRLANTISLLNQLHVAGRVCELPIKTLVHGTSLRGIIDRIIWNKDKKEIEVIDIKSHYIPFILDDPELKGMPQSKRLGYSFQLHVYVEMLDWLFTASPDALRDSFIGSIYNKDEPIHPIICSKLEIPKTITANNLFDILLKERSVFTDVKYTVLIMHIDQNYFKSEYKTGKASVVYESIKCNREWFKKMVFFDLAELERKKSLAEIHKKAAMAKKREEKKKIKQELKKSAKGKK</sequence>
<gene>
    <name type="ORF">ORF95</name>
</gene>
<name>Y095_OSHVF</name>